<accession>Q8FTN3</accession>
<reference key="1">
    <citation type="journal article" date="2003" name="Genome Res.">
        <title>Comparative complete genome sequence analysis of the amino acid replacements responsible for the thermostability of Corynebacterium efficiens.</title>
        <authorList>
            <person name="Nishio Y."/>
            <person name="Nakamura Y."/>
            <person name="Kawarabayasi Y."/>
            <person name="Usuda Y."/>
            <person name="Kimura E."/>
            <person name="Sugimoto S."/>
            <person name="Matsui K."/>
            <person name="Yamagishi A."/>
            <person name="Kikuchi H."/>
            <person name="Ikeo K."/>
            <person name="Gojobori T."/>
        </authorList>
    </citation>
    <scope>NUCLEOTIDE SEQUENCE [LARGE SCALE GENOMIC DNA]</scope>
    <source>
        <strain>DSM 44549 / YS-314 / AJ 12310 / JCM 11189 / NBRC 100395</strain>
    </source>
</reference>
<sequence length="302" mass="31868">MLAEALPWLQHFRDKIVVVKYGGNAMVDDSLKAAFAADMVFLRTVGAKPVVVHGGGPQISDMLRRVGLEGEFKGGFRVTTPEVMEIVRMVLFGQVGRDLVGLINSHGPYAVGTSGEDAGLFTAEKRLVDIDGTPTDIGLVGNIVNVDATSLMDLIDAGRIPVVSTIAPGADGQVYNINADTAAGALASAIGAERLLVLTNVEGLYTDWPNKSSLVSKIVASELDAILPGLDAGMIPKMESCLNAVRGGVNAAHVIDGRIAHSVLLELLTMGGIGTMVLPDNYAREDYPEGTVFRKNYQDGHA</sequence>
<name>ARGB_COREF</name>
<gene>
    <name evidence="1" type="primary">argB</name>
    <name type="ordered locus">CE1528</name>
</gene>
<comment type="function">
    <text evidence="1">Catalyzes the ATP-dependent phosphorylation of N-acetyl-L-glutamate.</text>
</comment>
<comment type="catalytic activity">
    <reaction evidence="1">
        <text>N-acetyl-L-glutamate + ATP = N-acetyl-L-glutamyl 5-phosphate + ADP</text>
        <dbReference type="Rhea" id="RHEA:14629"/>
        <dbReference type="ChEBI" id="CHEBI:30616"/>
        <dbReference type="ChEBI" id="CHEBI:44337"/>
        <dbReference type="ChEBI" id="CHEBI:57936"/>
        <dbReference type="ChEBI" id="CHEBI:456216"/>
        <dbReference type="EC" id="2.7.2.8"/>
    </reaction>
</comment>
<comment type="pathway">
    <text evidence="1">Amino-acid biosynthesis; L-arginine biosynthesis; N(2)-acetyl-L-ornithine from L-glutamate: step 2/4.</text>
</comment>
<comment type="subcellular location">
    <subcellularLocation>
        <location evidence="1">Cytoplasm</location>
    </subcellularLocation>
</comment>
<comment type="similarity">
    <text evidence="1">Belongs to the acetylglutamate kinase family. ArgB subfamily.</text>
</comment>
<comment type="sequence caution" evidence="2">
    <conflict type="erroneous initiation">
        <sequence resource="EMBL-CDS" id="BAC18338"/>
    </conflict>
</comment>
<feature type="chain" id="PRO_0000112609" description="Acetylglutamate kinase">
    <location>
        <begin position="1"/>
        <end position="302"/>
    </location>
</feature>
<feature type="binding site" evidence="1">
    <location>
        <begin position="55"/>
        <end position="56"/>
    </location>
    <ligand>
        <name>substrate</name>
    </ligand>
</feature>
<feature type="binding site" evidence="1">
    <location>
        <position position="77"/>
    </location>
    <ligand>
        <name>substrate</name>
    </ligand>
</feature>
<feature type="binding site" evidence="1">
    <location>
        <position position="176"/>
    </location>
    <ligand>
        <name>substrate</name>
    </ligand>
</feature>
<feature type="site" description="Transition state stabilizer" evidence="1">
    <location>
        <position position="20"/>
    </location>
</feature>
<feature type="site" description="Transition state stabilizer" evidence="1">
    <location>
        <position position="237"/>
    </location>
</feature>
<keyword id="KW-0028">Amino-acid biosynthesis</keyword>
<keyword id="KW-0055">Arginine biosynthesis</keyword>
<keyword id="KW-0067">ATP-binding</keyword>
<keyword id="KW-0963">Cytoplasm</keyword>
<keyword id="KW-0418">Kinase</keyword>
<keyword id="KW-0547">Nucleotide-binding</keyword>
<keyword id="KW-1185">Reference proteome</keyword>
<keyword id="KW-0808">Transferase</keyword>
<organism>
    <name type="scientific">Corynebacterium efficiens (strain DSM 44549 / YS-314 / AJ 12310 / JCM 11189 / NBRC 100395)</name>
    <dbReference type="NCBI Taxonomy" id="196164"/>
    <lineage>
        <taxon>Bacteria</taxon>
        <taxon>Bacillati</taxon>
        <taxon>Actinomycetota</taxon>
        <taxon>Actinomycetes</taxon>
        <taxon>Mycobacteriales</taxon>
        <taxon>Corynebacteriaceae</taxon>
        <taxon>Corynebacterium</taxon>
    </lineage>
</organism>
<protein>
    <recommendedName>
        <fullName evidence="1">Acetylglutamate kinase</fullName>
        <ecNumber evidence="1">2.7.2.8</ecNumber>
    </recommendedName>
    <alternativeName>
        <fullName evidence="1">N-acetyl-L-glutamate 5-phosphotransferase</fullName>
    </alternativeName>
    <alternativeName>
        <fullName evidence="1">NAG kinase</fullName>
        <shortName evidence="1">NAGK</shortName>
    </alternativeName>
</protein>
<evidence type="ECO:0000255" key="1">
    <source>
        <dbReference type="HAMAP-Rule" id="MF_00082"/>
    </source>
</evidence>
<evidence type="ECO:0000305" key="2"/>
<proteinExistence type="inferred from homology"/>
<dbReference type="EC" id="2.7.2.8" evidence="1"/>
<dbReference type="EMBL" id="BA000035">
    <property type="protein sequence ID" value="BAC18338.1"/>
    <property type="status" value="ALT_INIT"/>
    <property type="molecule type" value="Genomic_DNA"/>
</dbReference>
<dbReference type="RefSeq" id="WP_006770436.1">
    <property type="nucleotide sequence ID" value="NZ_GG700691.1"/>
</dbReference>
<dbReference type="SMR" id="Q8FTN3"/>
<dbReference type="STRING" id="196164.gene:10741943"/>
<dbReference type="KEGG" id="cef:CE1528"/>
<dbReference type="eggNOG" id="COG0548">
    <property type="taxonomic scope" value="Bacteria"/>
</dbReference>
<dbReference type="HOGENOM" id="CLU_053680_0_1_11"/>
<dbReference type="OrthoDB" id="9803155at2"/>
<dbReference type="UniPathway" id="UPA00068">
    <property type="reaction ID" value="UER00107"/>
</dbReference>
<dbReference type="Proteomes" id="UP000001409">
    <property type="component" value="Chromosome"/>
</dbReference>
<dbReference type="GO" id="GO:0005737">
    <property type="term" value="C:cytoplasm"/>
    <property type="evidence" value="ECO:0007669"/>
    <property type="project" value="UniProtKB-SubCell"/>
</dbReference>
<dbReference type="GO" id="GO:0003991">
    <property type="term" value="F:acetylglutamate kinase activity"/>
    <property type="evidence" value="ECO:0007669"/>
    <property type="project" value="UniProtKB-UniRule"/>
</dbReference>
<dbReference type="GO" id="GO:0005524">
    <property type="term" value="F:ATP binding"/>
    <property type="evidence" value="ECO:0007669"/>
    <property type="project" value="UniProtKB-UniRule"/>
</dbReference>
<dbReference type="GO" id="GO:0042450">
    <property type="term" value="P:arginine biosynthetic process via ornithine"/>
    <property type="evidence" value="ECO:0007669"/>
    <property type="project" value="UniProtKB-UniRule"/>
</dbReference>
<dbReference type="GO" id="GO:0006526">
    <property type="term" value="P:L-arginine biosynthetic process"/>
    <property type="evidence" value="ECO:0007669"/>
    <property type="project" value="UniProtKB-UniPathway"/>
</dbReference>
<dbReference type="CDD" id="cd04250">
    <property type="entry name" value="AAK_NAGK-C"/>
    <property type="match status" value="1"/>
</dbReference>
<dbReference type="FunFam" id="3.40.1160.10:FF:000004">
    <property type="entry name" value="Acetylglutamate kinase"/>
    <property type="match status" value="1"/>
</dbReference>
<dbReference type="Gene3D" id="3.40.1160.10">
    <property type="entry name" value="Acetylglutamate kinase-like"/>
    <property type="match status" value="1"/>
</dbReference>
<dbReference type="HAMAP" id="MF_00082">
    <property type="entry name" value="ArgB"/>
    <property type="match status" value="1"/>
</dbReference>
<dbReference type="InterPro" id="IPR036393">
    <property type="entry name" value="AceGlu_kinase-like_sf"/>
</dbReference>
<dbReference type="InterPro" id="IPR004662">
    <property type="entry name" value="AcgluKinase_fam"/>
</dbReference>
<dbReference type="InterPro" id="IPR037528">
    <property type="entry name" value="ArgB"/>
</dbReference>
<dbReference type="InterPro" id="IPR001048">
    <property type="entry name" value="Asp/Glu/Uridylate_kinase"/>
</dbReference>
<dbReference type="InterPro" id="IPR001057">
    <property type="entry name" value="Glu/AcGlu_kinase"/>
</dbReference>
<dbReference type="InterPro" id="IPR041727">
    <property type="entry name" value="NAGK-C"/>
</dbReference>
<dbReference type="NCBIfam" id="TIGR00761">
    <property type="entry name" value="argB"/>
    <property type="match status" value="1"/>
</dbReference>
<dbReference type="PANTHER" id="PTHR23342">
    <property type="entry name" value="N-ACETYLGLUTAMATE SYNTHASE"/>
    <property type="match status" value="1"/>
</dbReference>
<dbReference type="PANTHER" id="PTHR23342:SF0">
    <property type="entry name" value="N-ACETYLGLUTAMATE SYNTHASE, MITOCHONDRIAL"/>
    <property type="match status" value="1"/>
</dbReference>
<dbReference type="Pfam" id="PF00696">
    <property type="entry name" value="AA_kinase"/>
    <property type="match status" value="1"/>
</dbReference>
<dbReference type="PIRSF" id="PIRSF000728">
    <property type="entry name" value="NAGK"/>
    <property type="match status" value="1"/>
</dbReference>
<dbReference type="PRINTS" id="PR00474">
    <property type="entry name" value="GLU5KINASE"/>
</dbReference>
<dbReference type="SUPFAM" id="SSF53633">
    <property type="entry name" value="Carbamate kinase-like"/>
    <property type="match status" value="1"/>
</dbReference>